<reference key="1">
    <citation type="journal article" date="2001" name="Proc. Natl. Acad. Sci. U.S.A.">
        <title>Complete genome sequence of an M1 strain of Streptococcus pyogenes.</title>
        <authorList>
            <person name="Ferretti J.J."/>
            <person name="McShan W.M."/>
            <person name="Ajdic D.J."/>
            <person name="Savic D.J."/>
            <person name="Savic G."/>
            <person name="Lyon K."/>
            <person name="Primeaux C."/>
            <person name="Sezate S."/>
            <person name="Suvorov A.N."/>
            <person name="Kenton S."/>
            <person name="Lai H.S."/>
            <person name="Lin S.P."/>
            <person name="Qian Y."/>
            <person name="Jia H.G."/>
            <person name="Najar F.Z."/>
            <person name="Ren Q."/>
            <person name="Zhu H."/>
            <person name="Song L."/>
            <person name="White J."/>
            <person name="Yuan X."/>
            <person name="Clifton S.W."/>
            <person name="Roe B.A."/>
            <person name="McLaughlin R.E."/>
        </authorList>
    </citation>
    <scope>NUCLEOTIDE SEQUENCE [LARGE SCALE GENOMIC DNA]</scope>
    <source>
        <strain>ATCC 700294 / SF370 / Serotype M1</strain>
    </source>
</reference>
<reference key="2">
    <citation type="journal article" date="2005" name="J. Infect. Dis.">
        <title>Evolutionary origin and emergence of a highly successful clone of serotype M1 group A Streptococcus involved multiple horizontal gene transfer events.</title>
        <authorList>
            <person name="Sumby P."/>
            <person name="Porcella S.F."/>
            <person name="Madrigal A.G."/>
            <person name="Barbian K.D."/>
            <person name="Virtaneva K."/>
            <person name="Ricklefs S.M."/>
            <person name="Sturdevant D.E."/>
            <person name="Graham M.R."/>
            <person name="Vuopio-Varkila J."/>
            <person name="Hoe N.P."/>
            <person name="Musser J.M."/>
        </authorList>
    </citation>
    <scope>NUCLEOTIDE SEQUENCE [LARGE SCALE GENOMIC DNA]</scope>
    <source>
        <strain>ATCC BAA-947 / MGAS5005 / Serotype M1</strain>
    </source>
</reference>
<dbReference type="EMBL" id="AE004092">
    <property type="protein sequence ID" value="AAK33193.1"/>
    <property type="molecule type" value="Genomic_DNA"/>
</dbReference>
<dbReference type="EMBL" id="CP000017">
    <property type="protein sequence ID" value="AAZ50674.1"/>
    <property type="molecule type" value="Genomic_DNA"/>
</dbReference>
<dbReference type="RefSeq" id="NP_268471.1">
    <property type="nucleotide sequence ID" value="NC_002737.2"/>
</dbReference>
<dbReference type="SMR" id="Q9A1W3"/>
<dbReference type="PaxDb" id="1314-HKU360_00088"/>
<dbReference type="KEGG" id="spy:SPy_0062"/>
<dbReference type="KEGG" id="spz:M5005_Spy0055"/>
<dbReference type="PATRIC" id="fig|160490.10.peg.55"/>
<dbReference type="HOGENOM" id="CLU_093315_2_0_9"/>
<dbReference type="OMA" id="HISNLML"/>
<dbReference type="PRO" id="PR:Q9A1W3"/>
<dbReference type="Proteomes" id="UP000000750">
    <property type="component" value="Chromosome"/>
</dbReference>
<dbReference type="GO" id="GO:1990904">
    <property type="term" value="C:ribonucleoprotein complex"/>
    <property type="evidence" value="ECO:0007669"/>
    <property type="project" value="UniProtKB-KW"/>
</dbReference>
<dbReference type="GO" id="GO:0005840">
    <property type="term" value="C:ribosome"/>
    <property type="evidence" value="ECO:0007669"/>
    <property type="project" value="UniProtKB-KW"/>
</dbReference>
<dbReference type="GO" id="GO:0019843">
    <property type="term" value="F:rRNA binding"/>
    <property type="evidence" value="ECO:0007669"/>
    <property type="project" value="UniProtKB-UniRule"/>
</dbReference>
<dbReference type="GO" id="GO:0003735">
    <property type="term" value="F:structural constituent of ribosome"/>
    <property type="evidence" value="ECO:0007669"/>
    <property type="project" value="InterPro"/>
</dbReference>
<dbReference type="GO" id="GO:0006412">
    <property type="term" value="P:translation"/>
    <property type="evidence" value="ECO:0007669"/>
    <property type="project" value="UniProtKB-UniRule"/>
</dbReference>
<dbReference type="CDD" id="cd06089">
    <property type="entry name" value="KOW_RPL26"/>
    <property type="match status" value="1"/>
</dbReference>
<dbReference type="FunFam" id="2.30.30.30:FF:000004">
    <property type="entry name" value="50S ribosomal protein L24"/>
    <property type="match status" value="1"/>
</dbReference>
<dbReference type="Gene3D" id="2.30.30.30">
    <property type="match status" value="1"/>
</dbReference>
<dbReference type="HAMAP" id="MF_01326_B">
    <property type="entry name" value="Ribosomal_uL24_B"/>
    <property type="match status" value="1"/>
</dbReference>
<dbReference type="InterPro" id="IPR005824">
    <property type="entry name" value="KOW"/>
</dbReference>
<dbReference type="InterPro" id="IPR014722">
    <property type="entry name" value="Rib_uL2_dom2"/>
</dbReference>
<dbReference type="InterPro" id="IPR003256">
    <property type="entry name" value="Ribosomal_uL24"/>
</dbReference>
<dbReference type="InterPro" id="IPR005825">
    <property type="entry name" value="Ribosomal_uL24_CS"/>
</dbReference>
<dbReference type="InterPro" id="IPR041988">
    <property type="entry name" value="Ribosomal_uL24_KOW"/>
</dbReference>
<dbReference type="InterPro" id="IPR008991">
    <property type="entry name" value="Translation_prot_SH3-like_sf"/>
</dbReference>
<dbReference type="NCBIfam" id="TIGR01079">
    <property type="entry name" value="rplX_bact"/>
    <property type="match status" value="1"/>
</dbReference>
<dbReference type="PANTHER" id="PTHR12903">
    <property type="entry name" value="MITOCHONDRIAL RIBOSOMAL PROTEIN L24"/>
    <property type="match status" value="1"/>
</dbReference>
<dbReference type="Pfam" id="PF00467">
    <property type="entry name" value="KOW"/>
    <property type="match status" value="1"/>
</dbReference>
<dbReference type="Pfam" id="PF17136">
    <property type="entry name" value="ribosomal_L24"/>
    <property type="match status" value="1"/>
</dbReference>
<dbReference type="SMART" id="SM00739">
    <property type="entry name" value="KOW"/>
    <property type="match status" value="1"/>
</dbReference>
<dbReference type="SUPFAM" id="SSF50104">
    <property type="entry name" value="Translation proteins SH3-like domain"/>
    <property type="match status" value="1"/>
</dbReference>
<dbReference type="PROSITE" id="PS01108">
    <property type="entry name" value="RIBOSOMAL_L24"/>
    <property type="match status" value="1"/>
</dbReference>
<feature type="chain" id="PRO_0000130731" description="Large ribosomal subunit protein uL24">
    <location>
        <begin position="1"/>
        <end position="101"/>
    </location>
</feature>
<evidence type="ECO:0000255" key="1">
    <source>
        <dbReference type="HAMAP-Rule" id="MF_01326"/>
    </source>
</evidence>
<evidence type="ECO:0000305" key="2"/>
<name>RL24_STRP1</name>
<keyword id="KW-1185">Reference proteome</keyword>
<keyword id="KW-0687">Ribonucleoprotein</keyword>
<keyword id="KW-0689">Ribosomal protein</keyword>
<keyword id="KW-0694">RNA-binding</keyword>
<keyword id="KW-0699">rRNA-binding</keyword>
<organism>
    <name type="scientific">Streptococcus pyogenes serotype M1</name>
    <dbReference type="NCBI Taxonomy" id="301447"/>
    <lineage>
        <taxon>Bacteria</taxon>
        <taxon>Bacillati</taxon>
        <taxon>Bacillota</taxon>
        <taxon>Bacilli</taxon>
        <taxon>Lactobacillales</taxon>
        <taxon>Streptococcaceae</taxon>
        <taxon>Streptococcus</taxon>
    </lineage>
</organism>
<proteinExistence type="inferred from homology"/>
<accession>Q9A1W3</accession>
<accession>Q491P4</accession>
<comment type="function">
    <text evidence="1">One of two assembly initiator proteins, it binds directly to the 5'-end of the 23S rRNA, where it nucleates assembly of the 50S subunit.</text>
</comment>
<comment type="function">
    <text evidence="1">One of the proteins that surrounds the polypeptide exit tunnel on the outside of the subunit.</text>
</comment>
<comment type="subunit">
    <text evidence="1">Part of the 50S ribosomal subunit.</text>
</comment>
<comment type="similarity">
    <text evidence="1">Belongs to the universal ribosomal protein uL24 family.</text>
</comment>
<gene>
    <name evidence="1" type="primary">rplX</name>
    <name type="ordered locus">SPy_0062</name>
    <name type="ordered locus">M5005_Spy0055</name>
</gene>
<protein>
    <recommendedName>
        <fullName evidence="1">Large ribosomal subunit protein uL24</fullName>
    </recommendedName>
    <alternativeName>
        <fullName evidence="2">50S ribosomal protein L24</fullName>
    </alternativeName>
</protein>
<sequence>MFVKKGDKVRVIAGKDKGTEAVVLKALPKVNKVIVEGVGMIKKHQKPNTENPQGAIVEKEAPIHVSNVQVLDKNGVAGRIGYKVVDGKKVRYSKKSGEVLD</sequence>